<gene>
    <name type="primary">IL5</name>
</gene>
<feature type="signal peptide" evidence="1">
    <location>
        <begin position="1"/>
        <end position="19"/>
    </location>
</feature>
<feature type="chain" id="PRO_0000015567" description="Interleukin-5">
    <location>
        <begin position="20"/>
        <end position="132"/>
    </location>
</feature>
<feature type="glycosylation site" description="N-linked (GlcNAc...) asparagine" evidence="4">
    <location>
        <position position="45"/>
    </location>
</feature>
<feature type="glycosylation site" description="N-linked (GlcNAc...) asparagine" evidence="4">
    <location>
        <position position="74"/>
    </location>
</feature>
<feature type="glycosylation site" description="N-linked (GlcNAc...) asparagine" evidence="4">
    <location>
        <position position="88"/>
    </location>
</feature>
<feature type="disulfide bond" description="Interchain (with C-103)" evidence="1">
    <location>
        <position position="61"/>
    </location>
</feature>
<feature type="disulfide bond" description="Interchain (with C-61)" evidence="1">
    <location>
        <position position="103"/>
    </location>
</feature>
<keyword id="KW-0202">Cytokine</keyword>
<keyword id="KW-1015">Disulfide bond</keyword>
<keyword id="KW-0325">Glycoprotein</keyword>
<keyword id="KW-0339">Growth factor</keyword>
<keyword id="KW-0964">Secreted</keyword>
<keyword id="KW-0732">Signal</keyword>
<name>IL5_SIGHI</name>
<sequence>MRMLLHLSILTLACVWTFAVEIPMHTVVKETLIQLSTHRALLTSNETVRLPVPTHKNHQLCIGEIFRGLDILKNQTVRGGTVETLFQNLSLIKKYIDRQKEKCGEERRRTRQFLDYLQEFLGVMGTEWTMEH</sequence>
<dbReference type="EMBL" id="AF148211">
    <property type="protein sequence ID" value="AAG16722.1"/>
    <property type="molecule type" value="mRNA"/>
</dbReference>
<dbReference type="SMR" id="Q9ESI9"/>
<dbReference type="GlyCosmos" id="Q9ESI9">
    <property type="glycosylation" value="3 sites, No reported glycans"/>
</dbReference>
<dbReference type="OrthoDB" id="9446172at2759"/>
<dbReference type="GO" id="GO:0005615">
    <property type="term" value="C:extracellular space"/>
    <property type="evidence" value="ECO:0007669"/>
    <property type="project" value="UniProtKB-KW"/>
</dbReference>
<dbReference type="GO" id="GO:0005125">
    <property type="term" value="F:cytokine activity"/>
    <property type="evidence" value="ECO:0007669"/>
    <property type="project" value="UniProtKB-KW"/>
</dbReference>
<dbReference type="GO" id="GO:0008083">
    <property type="term" value="F:growth factor activity"/>
    <property type="evidence" value="ECO:0007669"/>
    <property type="project" value="UniProtKB-KW"/>
</dbReference>
<dbReference type="GO" id="GO:0005137">
    <property type="term" value="F:interleukin-5 receptor binding"/>
    <property type="evidence" value="ECO:0007669"/>
    <property type="project" value="InterPro"/>
</dbReference>
<dbReference type="GO" id="GO:0006955">
    <property type="term" value="P:immune response"/>
    <property type="evidence" value="ECO:0007669"/>
    <property type="project" value="InterPro"/>
</dbReference>
<dbReference type="Gene3D" id="1.20.1250.10">
    <property type="match status" value="1"/>
</dbReference>
<dbReference type="InterPro" id="IPR009079">
    <property type="entry name" value="4_helix_cytokine-like_core"/>
</dbReference>
<dbReference type="InterPro" id="IPR000186">
    <property type="entry name" value="IL-5"/>
</dbReference>
<dbReference type="PANTHER" id="PTHR48491">
    <property type="entry name" value="INTERLEUKIN-5"/>
    <property type="match status" value="1"/>
</dbReference>
<dbReference type="PANTHER" id="PTHR48491:SF1">
    <property type="entry name" value="INTERLEUKIN-5"/>
    <property type="match status" value="1"/>
</dbReference>
<dbReference type="Pfam" id="PF02025">
    <property type="entry name" value="IL5"/>
    <property type="match status" value="1"/>
</dbReference>
<dbReference type="PRINTS" id="PR00432">
    <property type="entry name" value="INTERLEUKIN5"/>
</dbReference>
<dbReference type="SUPFAM" id="SSF47266">
    <property type="entry name" value="4-helical cytokines"/>
    <property type="match status" value="1"/>
</dbReference>
<reference key="1">
    <citation type="journal article" date="2000" name="Gene">
        <title>Cloning, expression and purification of recombinant cotton rat interleukin-5.</title>
        <authorList>
            <person name="Houard S."/>
            <person name="Jacquet A."/>
            <person name="Haumont M."/>
            <person name="Daminet V."/>
            <person name="Milican F."/>
            <person name="Glineur F."/>
            <person name="Bollen A."/>
        </authorList>
    </citation>
    <scope>NUCLEOTIDE SEQUENCE [MRNA]</scope>
    <source>
        <tissue>Spleen</tissue>
    </source>
</reference>
<accession>Q9ESI9</accession>
<comment type="function">
    <text evidence="2 3">Homodimeric cytokine expressed predominantly by T-lymphocytes and NK cells that plays an important role in the survival, differentiation, and chemotaxis of eosinophils. Also acts on activated and resting B-cells to induce immunoglobulin production, growth, and differentiation (By similarity). Mechanistically, exerts its biological effects through a receptor composed of IL5RA subunit and the cytokine receptor common subunit beta/CSF2RB. Binding to the receptor leads to activation of various kinases including LYN, SYK and JAK2 and thereby propagates signals through the RAS-MAPK and JAK-STAT5 pathways respectively (By similarity).</text>
</comment>
<comment type="subunit">
    <text evidence="2 3">Homodimer; disulfide-linked. Interacts with IL5RA. Interacts with CSF2RB.</text>
</comment>
<comment type="subcellular location">
    <subcellularLocation>
        <location evidence="2">Secreted</location>
    </subcellularLocation>
</comment>
<comment type="similarity">
    <text evidence="5">Belongs to the IL-5 family.</text>
</comment>
<organism>
    <name type="scientific">Sigmodon hispidus</name>
    <name type="common">Hispid cotton rat</name>
    <dbReference type="NCBI Taxonomy" id="42415"/>
    <lineage>
        <taxon>Eukaryota</taxon>
        <taxon>Metazoa</taxon>
        <taxon>Chordata</taxon>
        <taxon>Craniata</taxon>
        <taxon>Vertebrata</taxon>
        <taxon>Euteleostomi</taxon>
        <taxon>Mammalia</taxon>
        <taxon>Eutheria</taxon>
        <taxon>Euarchontoglires</taxon>
        <taxon>Glires</taxon>
        <taxon>Rodentia</taxon>
        <taxon>Myomorpha</taxon>
        <taxon>Muroidea</taxon>
        <taxon>Cricetidae</taxon>
        <taxon>Sigmodontinae</taxon>
        <taxon>Sigmodon</taxon>
    </lineage>
</organism>
<proteinExistence type="evidence at transcript level"/>
<protein>
    <recommendedName>
        <fullName>Interleukin-5</fullName>
        <shortName>IL-5</shortName>
    </recommendedName>
    <alternativeName>
        <fullName>Eosinophil differentiation factor</fullName>
    </alternativeName>
    <alternativeName>
        <fullName>T-cell replacing factor</fullName>
        <shortName>TRF</shortName>
    </alternativeName>
</protein>
<evidence type="ECO:0000250" key="1"/>
<evidence type="ECO:0000250" key="2">
    <source>
        <dbReference type="UniProtKB" id="P04401"/>
    </source>
</evidence>
<evidence type="ECO:0000250" key="3">
    <source>
        <dbReference type="UniProtKB" id="P05113"/>
    </source>
</evidence>
<evidence type="ECO:0000255" key="4"/>
<evidence type="ECO:0000305" key="5"/>